<feature type="chain" id="PRO_0000374372" description="tRNA-2-methylthio-N(6)-dimethylallyladenosine synthase">
    <location>
        <begin position="1"/>
        <end position="475"/>
    </location>
</feature>
<feature type="domain" description="MTTase N-terminal" evidence="1">
    <location>
        <begin position="25"/>
        <end position="145"/>
    </location>
</feature>
<feature type="domain" description="Radical SAM core" evidence="2">
    <location>
        <begin position="172"/>
        <end position="404"/>
    </location>
</feature>
<feature type="domain" description="TRAM" evidence="1">
    <location>
        <begin position="407"/>
        <end position="469"/>
    </location>
</feature>
<feature type="region of interest" description="Disordered" evidence="3">
    <location>
        <begin position="1"/>
        <end position="20"/>
    </location>
</feature>
<feature type="binding site" evidence="1">
    <location>
        <position position="34"/>
    </location>
    <ligand>
        <name>[4Fe-4S] cluster</name>
        <dbReference type="ChEBI" id="CHEBI:49883"/>
        <label>1</label>
    </ligand>
</feature>
<feature type="binding site" evidence="1">
    <location>
        <position position="70"/>
    </location>
    <ligand>
        <name>[4Fe-4S] cluster</name>
        <dbReference type="ChEBI" id="CHEBI:49883"/>
        <label>1</label>
    </ligand>
</feature>
<feature type="binding site" evidence="1">
    <location>
        <position position="108"/>
    </location>
    <ligand>
        <name>[4Fe-4S] cluster</name>
        <dbReference type="ChEBI" id="CHEBI:49883"/>
        <label>1</label>
    </ligand>
</feature>
<feature type="binding site" evidence="1">
    <location>
        <position position="186"/>
    </location>
    <ligand>
        <name>[4Fe-4S] cluster</name>
        <dbReference type="ChEBI" id="CHEBI:49883"/>
        <label>2</label>
        <note>4Fe-4S-S-AdoMet</note>
    </ligand>
</feature>
<feature type="binding site" evidence="1">
    <location>
        <position position="190"/>
    </location>
    <ligand>
        <name>[4Fe-4S] cluster</name>
        <dbReference type="ChEBI" id="CHEBI:49883"/>
        <label>2</label>
        <note>4Fe-4S-S-AdoMet</note>
    </ligand>
</feature>
<feature type="binding site" evidence="1">
    <location>
        <position position="193"/>
    </location>
    <ligand>
        <name>[4Fe-4S] cluster</name>
        <dbReference type="ChEBI" id="CHEBI:49883"/>
        <label>2</label>
        <note>4Fe-4S-S-AdoMet</note>
    </ligand>
</feature>
<sequence>MEQNLTTERSETSSSRAGTASRTDKKVFVKTYGCQMNVYDSQRMADALAAEGYRATDVIEDADLVLLNTCHIREKAAEKVYSELGRIRVLKEERAKQGRETVVGVAGCVAQAEGREILRRAPAVDLVIGPQTYHRLPSVVTRARAGEKIVETEYAVEDKFDHLPAPERTAVRSRGVTAFLTVQEGCDKFCTFCVVPYTRGAEVSRPVAQIVAEAERLAEAGVRELTLLGQNVNAWHGEGPDGREWGLGRLLFRLAEIPGLDRLRYTTSHPRDMDEELIAAHRDLIKLMPYLHLPVQAGSDRILKAMNRKHTAADYLRLIERIRAARPDIAMSGDFIVGFPGETDRDFEDTMRIVRDVNYAQAFSFKYSPRPGTPGADMHDQVPDAVKDERLQRLQALLAEQQRAFGESLVGTEIDLLLEKPGRQAGQLVGRSPWLQPVIVEENAGQIGDIVRVRITSSGGHSLFCEPAGTARVAL</sequence>
<keyword id="KW-0004">4Fe-4S</keyword>
<keyword id="KW-0963">Cytoplasm</keyword>
<keyword id="KW-0408">Iron</keyword>
<keyword id="KW-0411">Iron-sulfur</keyword>
<keyword id="KW-0479">Metal-binding</keyword>
<keyword id="KW-0949">S-adenosyl-L-methionine</keyword>
<keyword id="KW-0808">Transferase</keyword>
<keyword id="KW-0819">tRNA processing</keyword>
<evidence type="ECO:0000255" key="1">
    <source>
        <dbReference type="HAMAP-Rule" id="MF_01864"/>
    </source>
</evidence>
<evidence type="ECO:0000255" key="2">
    <source>
        <dbReference type="PROSITE-ProRule" id="PRU01266"/>
    </source>
</evidence>
<evidence type="ECO:0000256" key="3">
    <source>
        <dbReference type="SAM" id="MobiDB-lite"/>
    </source>
</evidence>
<name>MIAB_CHESB</name>
<comment type="function">
    <text evidence="1">Catalyzes the methylthiolation of N6-(dimethylallyl)adenosine (i(6)A), leading to the formation of 2-methylthio-N6-(dimethylallyl)adenosine (ms(2)i(6)A) at position 37 in tRNAs that read codons beginning with uridine.</text>
</comment>
<comment type="catalytic activity">
    <reaction evidence="1">
        <text>N(6)-dimethylallyladenosine(37) in tRNA + (sulfur carrier)-SH + AH2 + 2 S-adenosyl-L-methionine = 2-methylsulfanyl-N(6)-dimethylallyladenosine(37) in tRNA + (sulfur carrier)-H + 5'-deoxyadenosine + L-methionine + A + S-adenosyl-L-homocysteine + 2 H(+)</text>
        <dbReference type="Rhea" id="RHEA:37067"/>
        <dbReference type="Rhea" id="RHEA-COMP:10375"/>
        <dbReference type="Rhea" id="RHEA-COMP:10376"/>
        <dbReference type="Rhea" id="RHEA-COMP:14737"/>
        <dbReference type="Rhea" id="RHEA-COMP:14739"/>
        <dbReference type="ChEBI" id="CHEBI:13193"/>
        <dbReference type="ChEBI" id="CHEBI:15378"/>
        <dbReference type="ChEBI" id="CHEBI:17319"/>
        <dbReference type="ChEBI" id="CHEBI:17499"/>
        <dbReference type="ChEBI" id="CHEBI:29917"/>
        <dbReference type="ChEBI" id="CHEBI:57844"/>
        <dbReference type="ChEBI" id="CHEBI:57856"/>
        <dbReference type="ChEBI" id="CHEBI:59789"/>
        <dbReference type="ChEBI" id="CHEBI:64428"/>
        <dbReference type="ChEBI" id="CHEBI:74415"/>
        <dbReference type="ChEBI" id="CHEBI:74417"/>
        <dbReference type="EC" id="2.8.4.3"/>
    </reaction>
</comment>
<comment type="cofactor">
    <cofactor evidence="1">
        <name>[4Fe-4S] cluster</name>
        <dbReference type="ChEBI" id="CHEBI:49883"/>
    </cofactor>
    <text evidence="1">Binds 2 [4Fe-4S] clusters. One cluster is coordinated with 3 cysteines and an exchangeable S-adenosyl-L-methionine.</text>
</comment>
<comment type="subunit">
    <text evidence="1">Monomer.</text>
</comment>
<comment type="subcellular location">
    <subcellularLocation>
        <location evidence="1">Cytoplasm</location>
    </subcellularLocation>
</comment>
<comment type="similarity">
    <text evidence="1">Belongs to the methylthiotransferase family. MiaB subfamily.</text>
</comment>
<proteinExistence type="inferred from homology"/>
<dbReference type="EC" id="2.8.4.3" evidence="1"/>
<dbReference type="EMBL" id="CP000390">
    <property type="protein sequence ID" value="ABG65286.1"/>
    <property type="molecule type" value="Genomic_DNA"/>
</dbReference>
<dbReference type="SMR" id="Q11BD9"/>
<dbReference type="STRING" id="266779.Meso_3919"/>
<dbReference type="KEGG" id="mes:Meso_3919"/>
<dbReference type="eggNOG" id="COG0621">
    <property type="taxonomic scope" value="Bacteria"/>
</dbReference>
<dbReference type="HOGENOM" id="CLU_018697_2_0_5"/>
<dbReference type="OrthoDB" id="9805215at2"/>
<dbReference type="GO" id="GO:0005829">
    <property type="term" value="C:cytosol"/>
    <property type="evidence" value="ECO:0007669"/>
    <property type="project" value="TreeGrafter"/>
</dbReference>
<dbReference type="GO" id="GO:0051539">
    <property type="term" value="F:4 iron, 4 sulfur cluster binding"/>
    <property type="evidence" value="ECO:0007669"/>
    <property type="project" value="UniProtKB-UniRule"/>
</dbReference>
<dbReference type="GO" id="GO:0046872">
    <property type="term" value="F:metal ion binding"/>
    <property type="evidence" value="ECO:0007669"/>
    <property type="project" value="UniProtKB-KW"/>
</dbReference>
<dbReference type="GO" id="GO:0035597">
    <property type="term" value="F:N6-isopentenyladenosine methylthiotransferase activity"/>
    <property type="evidence" value="ECO:0007669"/>
    <property type="project" value="TreeGrafter"/>
</dbReference>
<dbReference type="CDD" id="cd01335">
    <property type="entry name" value="Radical_SAM"/>
    <property type="match status" value="1"/>
</dbReference>
<dbReference type="FunFam" id="3.40.50.12160:FF:000001">
    <property type="entry name" value="tRNA-2-methylthio-N(6)-dimethylallyladenosine synthase"/>
    <property type="match status" value="1"/>
</dbReference>
<dbReference type="FunFam" id="3.80.30.20:FF:000001">
    <property type="entry name" value="tRNA-2-methylthio-N(6)-dimethylallyladenosine synthase 2"/>
    <property type="match status" value="1"/>
</dbReference>
<dbReference type="Gene3D" id="3.40.50.12160">
    <property type="entry name" value="Methylthiotransferase, N-terminal domain"/>
    <property type="match status" value="1"/>
</dbReference>
<dbReference type="Gene3D" id="3.80.30.20">
    <property type="entry name" value="tm_1862 like domain"/>
    <property type="match status" value="1"/>
</dbReference>
<dbReference type="HAMAP" id="MF_01864">
    <property type="entry name" value="tRNA_metthiotr_MiaB"/>
    <property type="match status" value="1"/>
</dbReference>
<dbReference type="InterPro" id="IPR006638">
    <property type="entry name" value="Elp3/MiaA/NifB-like_rSAM"/>
</dbReference>
<dbReference type="InterPro" id="IPR005839">
    <property type="entry name" value="Methylthiotransferase"/>
</dbReference>
<dbReference type="InterPro" id="IPR020612">
    <property type="entry name" value="Methylthiotransferase_CS"/>
</dbReference>
<dbReference type="InterPro" id="IPR013848">
    <property type="entry name" value="Methylthiotransferase_N"/>
</dbReference>
<dbReference type="InterPro" id="IPR038135">
    <property type="entry name" value="Methylthiotransferase_N_sf"/>
</dbReference>
<dbReference type="InterPro" id="IPR006463">
    <property type="entry name" value="MiaB_methiolase"/>
</dbReference>
<dbReference type="InterPro" id="IPR007197">
    <property type="entry name" value="rSAM"/>
</dbReference>
<dbReference type="InterPro" id="IPR023404">
    <property type="entry name" value="rSAM_horseshoe"/>
</dbReference>
<dbReference type="InterPro" id="IPR002792">
    <property type="entry name" value="TRAM_dom"/>
</dbReference>
<dbReference type="NCBIfam" id="TIGR01574">
    <property type="entry name" value="miaB-methiolase"/>
    <property type="match status" value="1"/>
</dbReference>
<dbReference type="NCBIfam" id="TIGR00089">
    <property type="entry name" value="MiaB/RimO family radical SAM methylthiotransferase"/>
    <property type="match status" value="1"/>
</dbReference>
<dbReference type="PANTHER" id="PTHR43020">
    <property type="entry name" value="CDK5 REGULATORY SUBUNIT-ASSOCIATED PROTEIN 1"/>
    <property type="match status" value="1"/>
</dbReference>
<dbReference type="PANTHER" id="PTHR43020:SF2">
    <property type="entry name" value="MITOCHONDRIAL TRNA METHYLTHIOTRANSFERASE CDK5RAP1"/>
    <property type="match status" value="1"/>
</dbReference>
<dbReference type="Pfam" id="PF04055">
    <property type="entry name" value="Radical_SAM"/>
    <property type="match status" value="1"/>
</dbReference>
<dbReference type="Pfam" id="PF01938">
    <property type="entry name" value="TRAM"/>
    <property type="match status" value="1"/>
</dbReference>
<dbReference type="Pfam" id="PF00919">
    <property type="entry name" value="UPF0004"/>
    <property type="match status" value="1"/>
</dbReference>
<dbReference type="SFLD" id="SFLDF00273">
    <property type="entry name" value="(dimethylallyl)adenosine_tRNA"/>
    <property type="match status" value="1"/>
</dbReference>
<dbReference type="SFLD" id="SFLDG01082">
    <property type="entry name" value="B12-binding_domain_containing"/>
    <property type="match status" value="1"/>
</dbReference>
<dbReference type="SFLD" id="SFLDS00029">
    <property type="entry name" value="Radical_SAM"/>
    <property type="match status" value="1"/>
</dbReference>
<dbReference type="SMART" id="SM00729">
    <property type="entry name" value="Elp3"/>
    <property type="match status" value="1"/>
</dbReference>
<dbReference type="SUPFAM" id="SSF102114">
    <property type="entry name" value="Radical SAM enzymes"/>
    <property type="match status" value="1"/>
</dbReference>
<dbReference type="PROSITE" id="PS51449">
    <property type="entry name" value="MTTASE_N"/>
    <property type="match status" value="1"/>
</dbReference>
<dbReference type="PROSITE" id="PS01278">
    <property type="entry name" value="MTTASE_RADICAL"/>
    <property type="match status" value="1"/>
</dbReference>
<dbReference type="PROSITE" id="PS51918">
    <property type="entry name" value="RADICAL_SAM"/>
    <property type="match status" value="1"/>
</dbReference>
<dbReference type="PROSITE" id="PS50926">
    <property type="entry name" value="TRAM"/>
    <property type="match status" value="1"/>
</dbReference>
<accession>Q11BD9</accession>
<protein>
    <recommendedName>
        <fullName evidence="1">tRNA-2-methylthio-N(6)-dimethylallyladenosine synthase</fullName>
        <ecNumber evidence="1">2.8.4.3</ecNumber>
    </recommendedName>
    <alternativeName>
        <fullName evidence="1">(Dimethylallyl)adenosine tRNA methylthiotransferase MiaB</fullName>
    </alternativeName>
    <alternativeName>
        <fullName evidence="1">tRNA-i(6)A37 methylthiotransferase</fullName>
    </alternativeName>
</protein>
<gene>
    <name evidence="1" type="primary">miaB</name>
    <name type="ordered locus">Meso_3919</name>
</gene>
<organism>
    <name type="scientific">Chelativorans sp. (strain BNC1)</name>
    <dbReference type="NCBI Taxonomy" id="266779"/>
    <lineage>
        <taxon>Bacteria</taxon>
        <taxon>Pseudomonadati</taxon>
        <taxon>Pseudomonadota</taxon>
        <taxon>Alphaproteobacteria</taxon>
        <taxon>Hyphomicrobiales</taxon>
        <taxon>Phyllobacteriaceae</taxon>
        <taxon>Chelativorans</taxon>
    </lineage>
</organism>
<reference key="1">
    <citation type="submission" date="2006-06" db="EMBL/GenBank/DDBJ databases">
        <title>Complete sequence of chromosome of Mesorhizobium sp. BNC1.</title>
        <authorList>
            <consortium name="US DOE Joint Genome Institute"/>
            <person name="Copeland A."/>
            <person name="Lucas S."/>
            <person name="Lapidus A."/>
            <person name="Barry K."/>
            <person name="Detter J.C."/>
            <person name="Glavina del Rio T."/>
            <person name="Hammon N."/>
            <person name="Israni S."/>
            <person name="Dalin E."/>
            <person name="Tice H."/>
            <person name="Pitluck S."/>
            <person name="Chertkov O."/>
            <person name="Brettin T."/>
            <person name="Bruce D."/>
            <person name="Han C."/>
            <person name="Tapia R."/>
            <person name="Gilna P."/>
            <person name="Schmutz J."/>
            <person name="Larimer F."/>
            <person name="Land M."/>
            <person name="Hauser L."/>
            <person name="Kyrpides N."/>
            <person name="Mikhailova N."/>
            <person name="Richardson P."/>
        </authorList>
    </citation>
    <scope>NUCLEOTIDE SEQUENCE [LARGE SCALE GENOMIC DNA]</scope>
    <source>
        <strain>BNC1</strain>
    </source>
</reference>